<reference key="1">
    <citation type="submission" date="2003-04" db="EMBL/GenBank/DDBJ databases">
        <title>Amgen rat EST program.</title>
        <authorList>
            <person name="Fitzpatrick D."/>
        </authorList>
    </citation>
    <scope>NUCLEOTIDE SEQUENCE [MRNA] OF 1-134</scope>
    <source>
        <tissue>Spinal ganglion</tissue>
    </source>
</reference>
<reference key="2">
    <citation type="journal article" date="2002" name="Gene">
        <title>cDNA cloning, DNA binding, and evolution of mammalian transcription factor IIIA.</title>
        <authorList>
            <person name="Hanas J.S."/>
            <person name="Hocker J.R."/>
            <person name="Cheng Y.-G."/>
            <person name="Lerner M.R."/>
            <person name="Brackett D.J."/>
            <person name="Lightfoot S.A."/>
            <person name="Hanas R.J."/>
            <person name="Madhusudhan K.T."/>
            <person name="Moreland R.J."/>
        </authorList>
    </citation>
    <scope>NUCLEOTIDE SEQUENCE [MRNA] OF 28-363</scope>
    <source>
        <strain>Sprague-Dawley</strain>
        <tissue>Brain</tissue>
    </source>
</reference>
<accession>Q8VHT8</accession>
<dbReference type="EMBL" id="CB616240">
    <property type="status" value="NOT_ANNOTATED_CDS"/>
    <property type="molecule type" value="mRNA"/>
</dbReference>
<dbReference type="EMBL" id="AF391798">
    <property type="protein sequence ID" value="AAL69685.1"/>
    <property type="molecule type" value="mRNA"/>
</dbReference>
<dbReference type="RefSeq" id="NP_001107042.1">
    <property type="nucleotide sequence ID" value="NM_001113570.1"/>
</dbReference>
<dbReference type="SMR" id="Q8VHT8"/>
<dbReference type="BioGRID" id="251579">
    <property type="interactions" value="1"/>
</dbReference>
<dbReference type="FunCoup" id="Q8VHT8">
    <property type="interactions" value="842"/>
</dbReference>
<dbReference type="STRING" id="10116.ENSRNOP00000065623"/>
<dbReference type="PhosphoSitePlus" id="Q8VHT8"/>
<dbReference type="PaxDb" id="10116-ENSRNOP00000065623"/>
<dbReference type="GeneID" id="246299"/>
<dbReference type="KEGG" id="rno:246299"/>
<dbReference type="AGR" id="RGD:619746"/>
<dbReference type="CTD" id="2971"/>
<dbReference type="RGD" id="619746">
    <property type="gene designation" value="Gtf3a"/>
</dbReference>
<dbReference type="eggNOG" id="KOG1721">
    <property type="taxonomic scope" value="Eukaryota"/>
</dbReference>
<dbReference type="InParanoid" id="Q8VHT8"/>
<dbReference type="OrthoDB" id="58790at9989"/>
<dbReference type="PhylomeDB" id="Q8VHT8"/>
<dbReference type="Reactome" id="R-RNO-76061">
    <property type="pathway name" value="RNA Polymerase III Transcription Initiation From Type 1 Promoter"/>
</dbReference>
<dbReference type="PRO" id="PR:Q8VHT8"/>
<dbReference type="Proteomes" id="UP000002494">
    <property type="component" value="Unplaced"/>
</dbReference>
<dbReference type="GO" id="GO:0005634">
    <property type="term" value="C:nucleus"/>
    <property type="evidence" value="ECO:0000318"/>
    <property type="project" value="GO_Central"/>
</dbReference>
<dbReference type="GO" id="GO:0008097">
    <property type="term" value="F:5S rRNA binding"/>
    <property type="evidence" value="ECO:0000250"/>
    <property type="project" value="UniProtKB"/>
</dbReference>
<dbReference type="GO" id="GO:0003677">
    <property type="term" value="F:DNA binding"/>
    <property type="evidence" value="ECO:0000314"/>
    <property type="project" value="RGD"/>
</dbReference>
<dbReference type="GO" id="GO:0000995">
    <property type="term" value="F:RNA polymerase III general transcription initiation factor activity"/>
    <property type="evidence" value="ECO:0000314"/>
    <property type="project" value="RGD"/>
</dbReference>
<dbReference type="GO" id="GO:0008270">
    <property type="term" value="F:zinc ion binding"/>
    <property type="evidence" value="ECO:0007669"/>
    <property type="project" value="UniProtKB-KW"/>
</dbReference>
<dbReference type="GO" id="GO:0042273">
    <property type="term" value="P:ribosomal large subunit biogenesis"/>
    <property type="evidence" value="ECO:0000250"/>
    <property type="project" value="UniProtKB"/>
</dbReference>
<dbReference type="FunFam" id="3.30.160.60:FF:001572">
    <property type="entry name" value="General transcription factor IIIA"/>
    <property type="match status" value="1"/>
</dbReference>
<dbReference type="FunFam" id="3.30.160.60:FF:001810">
    <property type="entry name" value="General transcription factor IIIA"/>
    <property type="match status" value="1"/>
</dbReference>
<dbReference type="FunFam" id="3.30.160.60:FF:000125">
    <property type="entry name" value="Putative zinc finger protein 143"/>
    <property type="match status" value="1"/>
</dbReference>
<dbReference type="FunFam" id="3.30.160.60:FF:001102">
    <property type="entry name" value="Transcription factor IIIA"/>
    <property type="match status" value="1"/>
</dbReference>
<dbReference type="FunFam" id="3.30.160.60:FF:001347">
    <property type="entry name" value="Transcription factor IIIA"/>
    <property type="match status" value="1"/>
</dbReference>
<dbReference type="FunFam" id="3.30.160.60:FF:001998">
    <property type="entry name" value="Transcription factor IIIA"/>
    <property type="match status" value="1"/>
</dbReference>
<dbReference type="FunFam" id="3.30.160.60:FF:001610">
    <property type="entry name" value="transcription factor IIIA"/>
    <property type="match status" value="1"/>
</dbReference>
<dbReference type="FunFam" id="3.30.160.60:FF:000145">
    <property type="entry name" value="Zinc finger protein 574"/>
    <property type="match status" value="1"/>
</dbReference>
<dbReference type="Gene3D" id="3.30.160.60">
    <property type="entry name" value="Classic Zinc Finger"/>
    <property type="match status" value="8"/>
</dbReference>
<dbReference type="InterPro" id="IPR054599">
    <property type="entry name" value="TFIIIA_Zfn-C2H2"/>
</dbReference>
<dbReference type="InterPro" id="IPR051061">
    <property type="entry name" value="Zinc_finger_trans_reg"/>
</dbReference>
<dbReference type="InterPro" id="IPR036236">
    <property type="entry name" value="Znf_C2H2_sf"/>
</dbReference>
<dbReference type="InterPro" id="IPR013087">
    <property type="entry name" value="Znf_C2H2_type"/>
</dbReference>
<dbReference type="PANTHER" id="PTHR46179:SF1">
    <property type="entry name" value="TRANSCRIPTION FACTOR IIIA"/>
    <property type="match status" value="1"/>
</dbReference>
<dbReference type="PANTHER" id="PTHR46179">
    <property type="entry name" value="ZINC FINGER PROTEIN"/>
    <property type="match status" value="1"/>
</dbReference>
<dbReference type="Pfam" id="PF22110">
    <property type="entry name" value="TFIIIA_zf-C2H2"/>
    <property type="match status" value="1"/>
</dbReference>
<dbReference type="Pfam" id="PF00096">
    <property type="entry name" value="zf-C2H2"/>
    <property type="match status" value="4"/>
</dbReference>
<dbReference type="SMART" id="SM00355">
    <property type="entry name" value="ZnF_C2H2"/>
    <property type="match status" value="9"/>
</dbReference>
<dbReference type="SUPFAM" id="SSF57667">
    <property type="entry name" value="beta-beta-alpha zinc fingers"/>
    <property type="match status" value="7"/>
</dbReference>
<dbReference type="PROSITE" id="PS00028">
    <property type="entry name" value="ZINC_FINGER_C2H2_1"/>
    <property type="match status" value="8"/>
</dbReference>
<dbReference type="PROSITE" id="PS50157">
    <property type="entry name" value="ZINC_FINGER_C2H2_2"/>
    <property type="match status" value="8"/>
</dbReference>
<organism>
    <name type="scientific">Rattus norvegicus</name>
    <name type="common">Rat</name>
    <dbReference type="NCBI Taxonomy" id="10116"/>
    <lineage>
        <taxon>Eukaryota</taxon>
        <taxon>Metazoa</taxon>
        <taxon>Chordata</taxon>
        <taxon>Craniata</taxon>
        <taxon>Vertebrata</taxon>
        <taxon>Euteleostomi</taxon>
        <taxon>Mammalia</taxon>
        <taxon>Eutheria</taxon>
        <taxon>Euarchontoglires</taxon>
        <taxon>Glires</taxon>
        <taxon>Rodentia</taxon>
        <taxon>Myomorpha</taxon>
        <taxon>Muroidea</taxon>
        <taxon>Muridae</taxon>
        <taxon>Murinae</taxon>
        <taxon>Rattus</taxon>
    </lineage>
</organism>
<gene>
    <name type="primary">Gtf3a</name>
</gene>
<comment type="function">
    <text evidence="2 3">Involved in ribosomal large subunit biogenesis. Binds the approximately 50 base pairs internal control region (ICR) of 5S ribosomal RNA genes. It is required for their RNA polymerase III-dependent transcription and may also maintain the transcription of other genes (By similarity). Also binds the transcribed 5S RNA's (By similarity).</text>
</comment>
<comment type="subcellular location">
    <subcellularLocation>
        <location evidence="1">Nucleus</location>
    </subcellularLocation>
</comment>
<comment type="caution">
    <text evidence="6">It is uncertain whether Met-1 is the initiator. Based on the lack of an in-frame AUG codon, mammalian TFIIIA may be translated from this non-AUG initiation site, which has a good Kozak context and which is well conserved among mammals.</text>
</comment>
<feature type="chain" id="PRO_0000319867" description="Transcription factor IIIA">
    <location>
        <begin position="1"/>
        <end position="363"/>
    </location>
</feature>
<feature type="zinc finger region" description="C2H2-type 1" evidence="4">
    <location>
        <begin position="38"/>
        <end position="62"/>
    </location>
</feature>
<feature type="zinc finger region" description="C2H2-type 2" evidence="4">
    <location>
        <begin position="68"/>
        <end position="92"/>
    </location>
</feature>
<feature type="zinc finger region" description="C2H2-type 3" evidence="4">
    <location>
        <begin position="98"/>
        <end position="123"/>
    </location>
</feature>
<feature type="zinc finger region" description="C2H2-type 4" evidence="4">
    <location>
        <begin position="130"/>
        <end position="154"/>
    </location>
</feature>
<feature type="zinc finger region" description="C2H2-type 5" evidence="4">
    <location>
        <begin position="160"/>
        <end position="184"/>
    </location>
</feature>
<feature type="zinc finger region" description="C2H2-type 6" evidence="4">
    <location>
        <begin position="187"/>
        <end position="211"/>
    </location>
</feature>
<feature type="zinc finger region" description="C2H2-type 7" evidence="4">
    <location>
        <begin position="215"/>
        <end position="237"/>
    </location>
</feature>
<feature type="zinc finger region" description="C2H2-type 8" evidence="4">
    <location>
        <begin position="244"/>
        <end position="269"/>
    </location>
</feature>
<feature type="zinc finger region" description="C2H2-type 9" evidence="4">
    <location>
        <begin position="275"/>
        <end position="299"/>
    </location>
</feature>
<feature type="region of interest" description="Disordered" evidence="5">
    <location>
        <begin position="301"/>
        <end position="363"/>
    </location>
</feature>
<feature type="compositionally biased region" description="Low complexity" evidence="5">
    <location>
        <begin position="338"/>
        <end position="350"/>
    </location>
</feature>
<feature type="sequence conflict" description="In Ref. 1; AAL69685." evidence="6" ref="1">
    <original>PPRP</original>
    <variation>ARAG</variation>
    <location>
        <begin position="29"/>
        <end position="32"/>
    </location>
</feature>
<feature type="sequence conflict" description="In Ref. 1; AAL69685." evidence="6" ref="1">
    <original>I</original>
    <variation>T</variation>
    <location>
        <position position="39"/>
    </location>
</feature>
<feature type="sequence conflict" description="In Ref. 1; AAL69685." evidence="6" ref="1">
    <original>P</original>
    <variation>S</variation>
    <location>
        <position position="67"/>
    </location>
</feature>
<protein>
    <recommendedName>
        <fullName>Transcription factor IIIA</fullName>
        <shortName>TFIIIA</shortName>
    </recommendedName>
</protein>
<proteinExistence type="evidence at transcript level"/>
<name>TF3A_RAT</name>
<evidence type="ECO:0000250" key="1"/>
<evidence type="ECO:0000250" key="2">
    <source>
        <dbReference type="UniProtKB" id="P17842"/>
    </source>
</evidence>
<evidence type="ECO:0000250" key="3">
    <source>
        <dbReference type="UniProtKB" id="Q92664"/>
    </source>
</evidence>
<evidence type="ECO:0000255" key="4">
    <source>
        <dbReference type="PROSITE-ProRule" id="PRU00042"/>
    </source>
</evidence>
<evidence type="ECO:0000256" key="5">
    <source>
        <dbReference type="SAM" id="MobiDB-lite"/>
    </source>
</evidence>
<evidence type="ECO:0000305" key="6"/>
<sequence>MEPRVSVAEAVSSLTIADAFVRACVGPAPPRPALPSRFICSFPDCSASYNKAWKLDAHLCKHTGERPFVCDYEGCGKAFIRDYHLSRHILIHTGEKPFVCADNGCNQKFSTKSNLKKHIERKHENPQKQYVCNFEGCKKAFKKHQQLRTHQCQHTNEPLFRCTHEGCGKHFASPSRLKRHGKVHEGYLCQKGCSFVGKTWTELLKHTREAHKEEVTCTVCQKMFKRKDHLKQHMKTHAPERDVYRCPREGCARTYTTVFNLQSHILSFHEEKRPFVCEHAGCGKTFAMKQSLMRHSVVHDPDKKRMKLKVRPPRERRSLASRLSGYVPPKGKQEPDCSLPNSTESSSSPEATMLAPAALLTVH</sequence>
<keyword id="KW-0238">DNA-binding</keyword>
<keyword id="KW-0479">Metal-binding</keyword>
<keyword id="KW-0539">Nucleus</keyword>
<keyword id="KW-1185">Reference proteome</keyword>
<keyword id="KW-0677">Repeat</keyword>
<keyword id="KW-0690">Ribosome biogenesis</keyword>
<keyword id="KW-0694">RNA-binding</keyword>
<keyword id="KW-0804">Transcription</keyword>
<keyword id="KW-0805">Transcription regulation</keyword>
<keyword id="KW-0862">Zinc</keyword>
<keyword id="KW-0863">Zinc-finger</keyword>